<proteinExistence type="inferred from homology"/>
<accession>A5VKN2</accession>
<comment type="function">
    <text evidence="1">This protein is located at the 30S-50S ribosomal subunit interface and may play a role in the structure and function of the aminoacyl-tRNA binding site.</text>
</comment>
<comment type="similarity">
    <text evidence="1">Belongs to the bacterial ribosomal protein bL19 family.</text>
</comment>
<comment type="sequence caution" evidence="2">
    <conflict type="erroneous initiation">
        <sequence resource="EMBL-CDS" id="ABQ83406"/>
    </conflict>
</comment>
<feature type="chain" id="PRO_0000340738" description="Large ribosomal subunit protein bL19">
    <location>
        <begin position="1"/>
        <end position="119"/>
    </location>
</feature>
<name>RL19_LIMRD</name>
<evidence type="ECO:0000255" key="1">
    <source>
        <dbReference type="HAMAP-Rule" id="MF_00402"/>
    </source>
</evidence>
<evidence type="ECO:0000305" key="2"/>
<organism>
    <name type="scientific">Limosilactobacillus reuteri (strain DSM 20016)</name>
    <name type="common">Lactobacillus reuteri</name>
    <dbReference type="NCBI Taxonomy" id="557436"/>
    <lineage>
        <taxon>Bacteria</taxon>
        <taxon>Bacillati</taxon>
        <taxon>Bacillota</taxon>
        <taxon>Bacilli</taxon>
        <taxon>Lactobacillales</taxon>
        <taxon>Lactobacillaceae</taxon>
        <taxon>Limosilactobacillus</taxon>
    </lineage>
</organism>
<dbReference type="EMBL" id="CP000705">
    <property type="protein sequence ID" value="ABQ83406.1"/>
    <property type="status" value="ALT_INIT"/>
    <property type="molecule type" value="Genomic_DNA"/>
</dbReference>
<dbReference type="RefSeq" id="WP_003675625.1">
    <property type="nucleotide sequence ID" value="NC_009513.1"/>
</dbReference>
<dbReference type="SMR" id="A5VKN2"/>
<dbReference type="STRING" id="557436.Lreu_1149"/>
<dbReference type="GeneID" id="77191818"/>
<dbReference type="KEGG" id="lre:Lreu_1149"/>
<dbReference type="eggNOG" id="COG0335">
    <property type="taxonomic scope" value="Bacteria"/>
</dbReference>
<dbReference type="HOGENOM" id="CLU_103507_2_1_9"/>
<dbReference type="Proteomes" id="UP000001991">
    <property type="component" value="Chromosome"/>
</dbReference>
<dbReference type="GO" id="GO:0022625">
    <property type="term" value="C:cytosolic large ribosomal subunit"/>
    <property type="evidence" value="ECO:0007669"/>
    <property type="project" value="TreeGrafter"/>
</dbReference>
<dbReference type="GO" id="GO:0003735">
    <property type="term" value="F:structural constituent of ribosome"/>
    <property type="evidence" value="ECO:0007669"/>
    <property type="project" value="InterPro"/>
</dbReference>
<dbReference type="GO" id="GO:0006412">
    <property type="term" value="P:translation"/>
    <property type="evidence" value="ECO:0007669"/>
    <property type="project" value="UniProtKB-UniRule"/>
</dbReference>
<dbReference type="FunFam" id="2.30.30.790:FF:000001">
    <property type="entry name" value="50S ribosomal protein L19"/>
    <property type="match status" value="1"/>
</dbReference>
<dbReference type="Gene3D" id="2.30.30.790">
    <property type="match status" value="1"/>
</dbReference>
<dbReference type="HAMAP" id="MF_00402">
    <property type="entry name" value="Ribosomal_bL19"/>
    <property type="match status" value="1"/>
</dbReference>
<dbReference type="InterPro" id="IPR001857">
    <property type="entry name" value="Ribosomal_bL19"/>
</dbReference>
<dbReference type="InterPro" id="IPR018257">
    <property type="entry name" value="Ribosomal_bL19_CS"/>
</dbReference>
<dbReference type="InterPro" id="IPR038657">
    <property type="entry name" value="Ribosomal_bL19_sf"/>
</dbReference>
<dbReference type="InterPro" id="IPR008991">
    <property type="entry name" value="Translation_prot_SH3-like_sf"/>
</dbReference>
<dbReference type="NCBIfam" id="TIGR01024">
    <property type="entry name" value="rplS_bact"/>
    <property type="match status" value="1"/>
</dbReference>
<dbReference type="PANTHER" id="PTHR15680:SF9">
    <property type="entry name" value="LARGE RIBOSOMAL SUBUNIT PROTEIN BL19M"/>
    <property type="match status" value="1"/>
</dbReference>
<dbReference type="PANTHER" id="PTHR15680">
    <property type="entry name" value="RIBOSOMAL PROTEIN L19"/>
    <property type="match status" value="1"/>
</dbReference>
<dbReference type="Pfam" id="PF01245">
    <property type="entry name" value="Ribosomal_L19"/>
    <property type="match status" value="1"/>
</dbReference>
<dbReference type="PIRSF" id="PIRSF002191">
    <property type="entry name" value="Ribosomal_L19"/>
    <property type="match status" value="1"/>
</dbReference>
<dbReference type="PRINTS" id="PR00061">
    <property type="entry name" value="RIBOSOMALL19"/>
</dbReference>
<dbReference type="SUPFAM" id="SSF50104">
    <property type="entry name" value="Translation proteins SH3-like domain"/>
    <property type="match status" value="1"/>
</dbReference>
<dbReference type="PROSITE" id="PS01015">
    <property type="entry name" value="RIBOSOMAL_L19"/>
    <property type="match status" value="1"/>
</dbReference>
<reference key="1">
    <citation type="journal article" date="2011" name="PLoS Genet.">
        <title>The evolution of host specialization in the vertebrate gut symbiont Lactobacillus reuteri.</title>
        <authorList>
            <person name="Frese S.A."/>
            <person name="Benson A.K."/>
            <person name="Tannock G.W."/>
            <person name="Loach D.M."/>
            <person name="Kim J."/>
            <person name="Zhang M."/>
            <person name="Oh P.L."/>
            <person name="Heng N.C."/>
            <person name="Patil P.B."/>
            <person name="Juge N."/>
            <person name="Mackenzie D.A."/>
            <person name="Pearson B.M."/>
            <person name="Lapidus A."/>
            <person name="Dalin E."/>
            <person name="Tice H."/>
            <person name="Goltsman E."/>
            <person name="Land M."/>
            <person name="Hauser L."/>
            <person name="Ivanova N."/>
            <person name="Kyrpides N.C."/>
            <person name="Walter J."/>
        </authorList>
    </citation>
    <scope>NUCLEOTIDE SEQUENCE [LARGE SCALE GENOMIC DNA]</scope>
    <source>
        <strain>DSM 20016</strain>
    </source>
</reference>
<sequence length="119" mass="13817">MRQNKLIEKITASQLRDDIPEFRAGDTVRVHARIVEGSRERIQMFEGVVIKRHGAGISATYTVRKISNGVGVERTFPVHSPRVDKIDVLRYGRVRRAKLYYLRERTGKATRIAERRRDN</sequence>
<protein>
    <recommendedName>
        <fullName evidence="1">Large ribosomal subunit protein bL19</fullName>
    </recommendedName>
    <alternativeName>
        <fullName evidence="2">50S ribosomal protein L19</fullName>
    </alternativeName>
</protein>
<gene>
    <name evidence="1" type="primary">rplS</name>
    <name type="ordered locus">Lreu_1149</name>
</gene>
<keyword id="KW-1185">Reference proteome</keyword>
<keyword id="KW-0687">Ribonucleoprotein</keyword>
<keyword id="KW-0689">Ribosomal protein</keyword>